<feature type="chain" id="PRO_1000187388" description="2-hydroxy-3-keto-5-methylthiopentenyl-1-phosphate phosphatase">
    <location>
        <begin position="1"/>
        <end position="219"/>
    </location>
</feature>
<name>MTNX_BACCQ</name>
<keyword id="KW-0028">Amino-acid biosynthesis</keyword>
<keyword id="KW-0378">Hydrolase</keyword>
<keyword id="KW-0486">Methionine biosynthesis</keyword>
<evidence type="ECO:0000255" key="1">
    <source>
        <dbReference type="HAMAP-Rule" id="MF_01680"/>
    </source>
</evidence>
<dbReference type="EC" id="3.1.3.87" evidence="1"/>
<dbReference type="EMBL" id="CP000227">
    <property type="protein sequence ID" value="ACM14255.1"/>
    <property type="molecule type" value="Genomic_DNA"/>
</dbReference>
<dbReference type="SMR" id="B9IWQ0"/>
<dbReference type="KEGG" id="bcq:BCQ_3827"/>
<dbReference type="HOGENOM" id="CLU_058495_2_1_9"/>
<dbReference type="UniPathway" id="UPA00904">
    <property type="reaction ID" value="UER00877"/>
</dbReference>
<dbReference type="Proteomes" id="UP000000441">
    <property type="component" value="Chromosome"/>
</dbReference>
<dbReference type="GO" id="GO:0043716">
    <property type="term" value="F:2-hydroxy-3-keto-5-methylthiopentenyl-1-phosphate phosphatase activity"/>
    <property type="evidence" value="ECO:0007669"/>
    <property type="project" value="UniProtKB-UniRule"/>
</dbReference>
<dbReference type="GO" id="GO:0019509">
    <property type="term" value="P:L-methionine salvage from methylthioadenosine"/>
    <property type="evidence" value="ECO:0007669"/>
    <property type="project" value="UniProtKB-UniRule"/>
</dbReference>
<dbReference type="CDD" id="cd07524">
    <property type="entry name" value="HAD_Pase"/>
    <property type="match status" value="1"/>
</dbReference>
<dbReference type="Gene3D" id="3.90.1470.20">
    <property type="match status" value="1"/>
</dbReference>
<dbReference type="Gene3D" id="3.40.50.1000">
    <property type="entry name" value="HAD superfamily/HAD-like"/>
    <property type="match status" value="1"/>
</dbReference>
<dbReference type="HAMAP" id="MF_01680">
    <property type="entry name" value="Salvage_MtnX"/>
    <property type="match status" value="1"/>
</dbReference>
<dbReference type="InterPro" id="IPR050849">
    <property type="entry name" value="HAD-like_hydrolase_phosphatase"/>
</dbReference>
<dbReference type="InterPro" id="IPR036412">
    <property type="entry name" value="HAD-like_sf"/>
</dbReference>
<dbReference type="InterPro" id="IPR017718">
    <property type="entry name" value="HAD-SF_hydro_IB_MtnX"/>
</dbReference>
<dbReference type="InterPro" id="IPR006384">
    <property type="entry name" value="HAD_hydro_PyrdxlP_Pase-like"/>
</dbReference>
<dbReference type="InterPro" id="IPR023214">
    <property type="entry name" value="HAD_sf"/>
</dbReference>
<dbReference type="NCBIfam" id="TIGR01489">
    <property type="entry name" value="DKMTPPase-SF"/>
    <property type="match status" value="1"/>
</dbReference>
<dbReference type="NCBIfam" id="TIGR01488">
    <property type="entry name" value="HAD-SF-IB"/>
    <property type="match status" value="1"/>
</dbReference>
<dbReference type="NCBIfam" id="NF007103">
    <property type="entry name" value="PRK09552.1"/>
    <property type="match status" value="1"/>
</dbReference>
<dbReference type="NCBIfam" id="TIGR03333">
    <property type="entry name" value="salvage_mtnX"/>
    <property type="match status" value="1"/>
</dbReference>
<dbReference type="PANTHER" id="PTHR28181:SF2">
    <property type="entry name" value="PHOSPHORIC MONOESTER HYDROLASE"/>
    <property type="match status" value="1"/>
</dbReference>
<dbReference type="PANTHER" id="PTHR28181">
    <property type="entry name" value="UPF0655 PROTEIN YCR015C"/>
    <property type="match status" value="1"/>
</dbReference>
<dbReference type="Pfam" id="PF12710">
    <property type="entry name" value="HAD"/>
    <property type="match status" value="1"/>
</dbReference>
<dbReference type="SUPFAM" id="SSF56784">
    <property type="entry name" value="HAD-like"/>
    <property type="match status" value="1"/>
</dbReference>
<sequence length="219" mass="25298">MSIQVFCDFDGTITNNDNIMSIMEKFAPPEAEEVKNRILSQELSIQEGVSQLFQFIPTNLHDEIIQFLIETAEIRNGFHEFIQFVNENNISFYVISGGMDFFVYPLLQGLIPKEQIYCNETDFSNEYITVNWPHPCDRLCQNHCGLCKSSLIRKLSDTNDFHIVIGDSITDLQAAKQADKVFARDFLITKCEENHISYTAFETFHDVQTELKHLLEVKL</sequence>
<organism>
    <name type="scientific">Bacillus cereus (strain Q1)</name>
    <dbReference type="NCBI Taxonomy" id="361100"/>
    <lineage>
        <taxon>Bacteria</taxon>
        <taxon>Bacillati</taxon>
        <taxon>Bacillota</taxon>
        <taxon>Bacilli</taxon>
        <taxon>Bacillales</taxon>
        <taxon>Bacillaceae</taxon>
        <taxon>Bacillus</taxon>
        <taxon>Bacillus cereus group</taxon>
    </lineage>
</organism>
<comment type="function">
    <text evidence="1">Dephosphorylates 2-hydroxy-3-keto-5-methylthiopentenyl-1-phosphate (HK-MTPenyl-1-P) yielding 1,2-dihydroxy-3-keto-5-methylthiopentene (DHK-MTPene).</text>
</comment>
<comment type="catalytic activity">
    <reaction evidence="1">
        <text>2-hydroxy-5-methylsulfanyl-3-oxopent-1-enyl phosphate + H2O = 1,2-dihydroxy-5-(methylsulfanyl)pent-1-en-3-one + phosphate</text>
        <dbReference type="Rhea" id="RHEA:14481"/>
        <dbReference type="ChEBI" id="CHEBI:15377"/>
        <dbReference type="ChEBI" id="CHEBI:43474"/>
        <dbReference type="ChEBI" id="CHEBI:49252"/>
        <dbReference type="ChEBI" id="CHEBI:59505"/>
        <dbReference type="EC" id="3.1.3.87"/>
    </reaction>
</comment>
<comment type="pathway">
    <text evidence="1">Amino-acid biosynthesis; L-methionine biosynthesis via salvage pathway; L-methionine from S-methyl-5-thio-alpha-D-ribose 1-phosphate: step 4/6.</text>
</comment>
<comment type="similarity">
    <text evidence="1">Belongs to the HAD-like hydrolase superfamily. MtnX family.</text>
</comment>
<gene>
    <name evidence="1" type="primary">mtnX</name>
    <name type="ordered locus">BCQ_3827</name>
</gene>
<protein>
    <recommendedName>
        <fullName evidence="1">2-hydroxy-3-keto-5-methylthiopentenyl-1-phosphate phosphatase</fullName>
        <shortName evidence="1">HK-MTPenyl-1-P phosphatase</shortName>
        <ecNumber evidence="1">3.1.3.87</ecNumber>
    </recommendedName>
</protein>
<accession>B9IWQ0</accession>
<proteinExistence type="inferred from homology"/>
<reference key="1">
    <citation type="journal article" date="2009" name="J. Bacteriol.">
        <title>Complete genome sequence of the extremophilic Bacillus cereus strain Q1 with industrial applications.</title>
        <authorList>
            <person name="Xiong Z."/>
            <person name="Jiang Y."/>
            <person name="Qi D."/>
            <person name="Lu H."/>
            <person name="Yang F."/>
            <person name="Yang J."/>
            <person name="Chen L."/>
            <person name="Sun L."/>
            <person name="Xu X."/>
            <person name="Xue Y."/>
            <person name="Zhu Y."/>
            <person name="Jin Q."/>
        </authorList>
    </citation>
    <scope>NUCLEOTIDE SEQUENCE [LARGE SCALE GENOMIC DNA]</scope>
    <source>
        <strain>Q1</strain>
    </source>
</reference>